<proteinExistence type="inferred from homology"/>
<accession>B4EUH8</accession>
<comment type="catalytic activity">
    <reaction evidence="1">
        <text>(2R)-3-phosphoglycerate + ATP = (2R)-3-phospho-glyceroyl phosphate + ADP</text>
        <dbReference type="Rhea" id="RHEA:14801"/>
        <dbReference type="ChEBI" id="CHEBI:30616"/>
        <dbReference type="ChEBI" id="CHEBI:57604"/>
        <dbReference type="ChEBI" id="CHEBI:58272"/>
        <dbReference type="ChEBI" id="CHEBI:456216"/>
        <dbReference type="EC" id="2.7.2.3"/>
    </reaction>
</comment>
<comment type="pathway">
    <text evidence="1">Carbohydrate degradation; glycolysis; pyruvate from D-glyceraldehyde 3-phosphate: step 2/5.</text>
</comment>
<comment type="subunit">
    <text evidence="1">Monomer.</text>
</comment>
<comment type="subcellular location">
    <subcellularLocation>
        <location evidence="1">Cytoplasm</location>
    </subcellularLocation>
</comment>
<comment type="similarity">
    <text evidence="1">Belongs to the phosphoglycerate kinase family.</text>
</comment>
<sequence length="387" mass="41222">MSVIKMTDLDLAGKRVLIRADLNVPVKDGKVTSDARIRASLPTIEAALKQGAKVMVTSHLGRPTEGEYNEEFSLKPVVDYLKEKLSAPVSLAKDYLNGVDVNAGELVVLENVRFNKGEKKDDETLSKQYAALCDVFVMDAFGTAHRAQASTHGVAKFADIACAGPLLSAELEALGKALDKPERPMVAIVGGSKVSTKLTVLDSLSKIADQLIVGGGIANTFIAAEGHSVGRSLYEADLVDDAKKLMEKCDIPVPTDVRVATEFSETAPAVLKSANDIKDDEQVLDIGDVTAERLAEILKNAKTILWNGPVGVFEFPNFRKGTEVIAKAIADSDAFSIAGGGDTLAAIDLFDIADKISYISTGGGAFLEFVEGKKLPAVAMLEERAKQ</sequence>
<organism>
    <name type="scientific">Proteus mirabilis (strain HI4320)</name>
    <dbReference type="NCBI Taxonomy" id="529507"/>
    <lineage>
        <taxon>Bacteria</taxon>
        <taxon>Pseudomonadati</taxon>
        <taxon>Pseudomonadota</taxon>
        <taxon>Gammaproteobacteria</taxon>
        <taxon>Enterobacterales</taxon>
        <taxon>Morganellaceae</taxon>
        <taxon>Proteus</taxon>
    </lineage>
</organism>
<evidence type="ECO:0000255" key="1">
    <source>
        <dbReference type="HAMAP-Rule" id="MF_00145"/>
    </source>
</evidence>
<gene>
    <name evidence="1" type="primary">pgk</name>
    <name type="ordered locus">PMI0242</name>
</gene>
<dbReference type="EC" id="2.7.2.3" evidence="1"/>
<dbReference type="EMBL" id="AM942759">
    <property type="protein sequence ID" value="CAR40680.1"/>
    <property type="molecule type" value="Genomic_DNA"/>
</dbReference>
<dbReference type="RefSeq" id="WP_004247314.1">
    <property type="nucleotide sequence ID" value="NC_010554.1"/>
</dbReference>
<dbReference type="SMR" id="B4EUH8"/>
<dbReference type="EnsemblBacteria" id="CAR40680">
    <property type="protein sequence ID" value="CAR40680"/>
    <property type="gene ID" value="PMI0242"/>
</dbReference>
<dbReference type="GeneID" id="6802126"/>
<dbReference type="KEGG" id="pmr:PMI0242"/>
<dbReference type="eggNOG" id="COG0126">
    <property type="taxonomic scope" value="Bacteria"/>
</dbReference>
<dbReference type="HOGENOM" id="CLU_025427_0_2_6"/>
<dbReference type="UniPathway" id="UPA00109">
    <property type="reaction ID" value="UER00185"/>
</dbReference>
<dbReference type="Proteomes" id="UP000008319">
    <property type="component" value="Chromosome"/>
</dbReference>
<dbReference type="GO" id="GO:0005829">
    <property type="term" value="C:cytosol"/>
    <property type="evidence" value="ECO:0007669"/>
    <property type="project" value="TreeGrafter"/>
</dbReference>
<dbReference type="GO" id="GO:0043531">
    <property type="term" value="F:ADP binding"/>
    <property type="evidence" value="ECO:0007669"/>
    <property type="project" value="TreeGrafter"/>
</dbReference>
<dbReference type="GO" id="GO:0005524">
    <property type="term" value="F:ATP binding"/>
    <property type="evidence" value="ECO:0007669"/>
    <property type="project" value="UniProtKB-KW"/>
</dbReference>
<dbReference type="GO" id="GO:0004618">
    <property type="term" value="F:phosphoglycerate kinase activity"/>
    <property type="evidence" value="ECO:0007669"/>
    <property type="project" value="UniProtKB-UniRule"/>
</dbReference>
<dbReference type="GO" id="GO:0006094">
    <property type="term" value="P:gluconeogenesis"/>
    <property type="evidence" value="ECO:0007669"/>
    <property type="project" value="TreeGrafter"/>
</dbReference>
<dbReference type="GO" id="GO:0006096">
    <property type="term" value="P:glycolytic process"/>
    <property type="evidence" value="ECO:0007669"/>
    <property type="project" value="UniProtKB-UniRule"/>
</dbReference>
<dbReference type="FunFam" id="3.40.50.1260:FF:000001">
    <property type="entry name" value="Phosphoglycerate kinase"/>
    <property type="match status" value="1"/>
</dbReference>
<dbReference type="FunFam" id="3.40.50.1260:FF:000002">
    <property type="entry name" value="Phosphoglycerate kinase"/>
    <property type="match status" value="1"/>
</dbReference>
<dbReference type="Gene3D" id="3.40.50.1260">
    <property type="entry name" value="Phosphoglycerate kinase, N-terminal domain"/>
    <property type="match status" value="2"/>
</dbReference>
<dbReference type="HAMAP" id="MF_00145">
    <property type="entry name" value="Phosphoglyc_kinase"/>
    <property type="match status" value="1"/>
</dbReference>
<dbReference type="InterPro" id="IPR001576">
    <property type="entry name" value="Phosphoglycerate_kinase"/>
</dbReference>
<dbReference type="InterPro" id="IPR015911">
    <property type="entry name" value="Phosphoglycerate_kinase_CS"/>
</dbReference>
<dbReference type="InterPro" id="IPR015824">
    <property type="entry name" value="Phosphoglycerate_kinase_N"/>
</dbReference>
<dbReference type="InterPro" id="IPR036043">
    <property type="entry name" value="Phosphoglycerate_kinase_sf"/>
</dbReference>
<dbReference type="PANTHER" id="PTHR11406">
    <property type="entry name" value="PHOSPHOGLYCERATE KINASE"/>
    <property type="match status" value="1"/>
</dbReference>
<dbReference type="PANTHER" id="PTHR11406:SF23">
    <property type="entry name" value="PHOSPHOGLYCERATE KINASE 1, CHLOROPLASTIC-RELATED"/>
    <property type="match status" value="1"/>
</dbReference>
<dbReference type="Pfam" id="PF00162">
    <property type="entry name" value="PGK"/>
    <property type="match status" value="1"/>
</dbReference>
<dbReference type="PIRSF" id="PIRSF000724">
    <property type="entry name" value="Pgk"/>
    <property type="match status" value="1"/>
</dbReference>
<dbReference type="PRINTS" id="PR00477">
    <property type="entry name" value="PHGLYCKINASE"/>
</dbReference>
<dbReference type="SUPFAM" id="SSF53748">
    <property type="entry name" value="Phosphoglycerate kinase"/>
    <property type="match status" value="1"/>
</dbReference>
<dbReference type="PROSITE" id="PS00111">
    <property type="entry name" value="PGLYCERATE_KINASE"/>
    <property type="match status" value="1"/>
</dbReference>
<reference key="1">
    <citation type="journal article" date="2008" name="J. Bacteriol.">
        <title>Complete genome sequence of uropathogenic Proteus mirabilis, a master of both adherence and motility.</title>
        <authorList>
            <person name="Pearson M.M."/>
            <person name="Sebaihia M."/>
            <person name="Churcher C."/>
            <person name="Quail M.A."/>
            <person name="Seshasayee A.S."/>
            <person name="Luscombe N.M."/>
            <person name="Abdellah Z."/>
            <person name="Arrosmith C."/>
            <person name="Atkin B."/>
            <person name="Chillingworth T."/>
            <person name="Hauser H."/>
            <person name="Jagels K."/>
            <person name="Moule S."/>
            <person name="Mungall K."/>
            <person name="Norbertczak H."/>
            <person name="Rabbinowitsch E."/>
            <person name="Walker D."/>
            <person name="Whithead S."/>
            <person name="Thomson N.R."/>
            <person name="Rather P.N."/>
            <person name="Parkhill J."/>
            <person name="Mobley H.L.T."/>
        </authorList>
    </citation>
    <scope>NUCLEOTIDE SEQUENCE [LARGE SCALE GENOMIC DNA]</scope>
    <source>
        <strain>HI4320</strain>
    </source>
</reference>
<keyword id="KW-0067">ATP-binding</keyword>
<keyword id="KW-0963">Cytoplasm</keyword>
<keyword id="KW-0324">Glycolysis</keyword>
<keyword id="KW-0418">Kinase</keyword>
<keyword id="KW-0547">Nucleotide-binding</keyword>
<keyword id="KW-1185">Reference proteome</keyword>
<keyword id="KW-0808">Transferase</keyword>
<protein>
    <recommendedName>
        <fullName evidence="1">Phosphoglycerate kinase</fullName>
        <ecNumber evidence="1">2.7.2.3</ecNumber>
    </recommendedName>
</protein>
<name>PGK_PROMH</name>
<feature type="chain" id="PRO_1000096366" description="Phosphoglycerate kinase">
    <location>
        <begin position="1"/>
        <end position="387"/>
    </location>
</feature>
<feature type="binding site" evidence="1">
    <location>
        <begin position="21"/>
        <end position="23"/>
    </location>
    <ligand>
        <name>substrate</name>
    </ligand>
</feature>
<feature type="binding site" evidence="1">
    <location>
        <position position="36"/>
    </location>
    <ligand>
        <name>substrate</name>
    </ligand>
</feature>
<feature type="binding site" evidence="1">
    <location>
        <begin position="59"/>
        <end position="62"/>
    </location>
    <ligand>
        <name>substrate</name>
    </ligand>
</feature>
<feature type="binding site" evidence="1">
    <location>
        <position position="113"/>
    </location>
    <ligand>
        <name>substrate</name>
    </ligand>
</feature>
<feature type="binding site" evidence="1">
    <location>
        <position position="146"/>
    </location>
    <ligand>
        <name>substrate</name>
    </ligand>
</feature>
<feature type="binding site" evidence="1">
    <location>
        <position position="197"/>
    </location>
    <ligand>
        <name>ATP</name>
        <dbReference type="ChEBI" id="CHEBI:30616"/>
    </ligand>
</feature>
<feature type="binding site" evidence="1">
    <location>
        <position position="314"/>
    </location>
    <ligand>
        <name>ATP</name>
        <dbReference type="ChEBI" id="CHEBI:30616"/>
    </ligand>
</feature>
<feature type="binding site" evidence="1">
    <location>
        <begin position="340"/>
        <end position="343"/>
    </location>
    <ligand>
        <name>ATP</name>
        <dbReference type="ChEBI" id="CHEBI:30616"/>
    </ligand>
</feature>